<keyword id="KW-0227">DNA damage</keyword>
<keyword id="KW-0234">DNA repair</keyword>
<keyword id="KW-0255">Endonuclease</keyword>
<keyword id="KW-0378">Hydrolase</keyword>
<keyword id="KW-0479">Metal-binding</keyword>
<keyword id="KW-0540">Nuclease</keyword>
<keyword id="KW-0862">Zinc</keyword>
<sequence length="285" mass="31672">MKFVGAHVSAAGGVDQAVIRAHELEATAFALFTKNQRQWRAAPLAEDVIEKFKLACEKYGYTSAQILPHDSYLINLGHPVTEALEKSREAFIDELVRCQQLGLSLLNFHPGSHLLQIDEDQCLARIAESINIALDATEGVTAVIENTAGQGSNLGFKFEHLAAIIERVEDKSRVGVCIDTCHAFAAGYDLRTEEDCEHTFAALGKIVGFQYLRGMHLNDAKSEFNSRVDRHHSLGEGNIGKTVFSYIMRDSRFDNIPLILETVNMDIWAEEIAWLKSQAEIEPSL</sequence>
<accession>Q1CG79</accession>
<accession>C4GW30</accession>
<dbReference type="EC" id="3.1.21.2" evidence="1"/>
<dbReference type="EMBL" id="CP000305">
    <property type="protein sequence ID" value="ABG19001.1"/>
    <property type="molecule type" value="Genomic_DNA"/>
</dbReference>
<dbReference type="EMBL" id="ACNQ01000017">
    <property type="protein sequence ID" value="EEO75130.1"/>
    <property type="molecule type" value="Genomic_DNA"/>
</dbReference>
<dbReference type="RefSeq" id="WP_002208791.1">
    <property type="nucleotide sequence ID" value="NZ_ACNQ01000017.1"/>
</dbReference>
<dbReference type="SMR" id="Q1CG79"/>
<dbReference type="GeneID" id="57977438"/>
<dbReference type="KEGG" id="ypn:YPN_2673"/>
<dbReference type="HOGENOM" id="CLU_025885_0_4_6"/>
<dbReference type="Proteomes" id="UP000008936">
    <property type="component" value="Chromosome"/>
</dbReference>
<dbReference type="GO" id="GO:0008833">
    <property type="term" value="F:deoxyribonuclease IV (phage-T4-induced) activity"/>
    <property type="evidence" value="ECO:0007669"/>
    <property type="project" value="UniProtKB-UniRule"/>
</dbReference>
<dbReference type="GO" id="GO:0003677">
    <property type="term" value="F:DNA binding"/>
    <property type="evidence" value="ECO:0007669"/>
    <property type="project" value="InterPro"/>
</dbReference>
<dbReference type="GO" id="GO:0003906">
    <property type="term" value="F:DNA-(apurinic or apyrimidinic site) endonuclease activity"/>
    <property type="evidence" value="ECO:0007669"/>
    <property type="project" value="TreeGrafter"/>
</dbReference>
<dbReference type="GO" id="GO:0008081">
    <property type="term" value="F:phosphoric diester hydrolase activity"/>
    <property type="evidence" value="ECO:0007669"/>
    <property type="project" value="TreeGrafter"/>
</dbReference>
<dbReference type="GO" id="GO:0008270">
    <property type="term" value="F:zinc ion binding"/>
    <property type="evidence" value="ECO:0007669"/>
    <property type="project" value="UniProtKB-UniRule"/>
</dbReference>
<dbReference type="GO" id="GO:0006284">
    <property type="term" value="P:base-excision repair"/>
    <property type="evidence" value="ECO:0007669"/>
    <property type="project" value="TreeGrafter"/>
</dbReference>
<dbReference type="CDD" id="cd00019">
    <property type="entry name" value="AP2Ec"/>
    <property type="match status" value="1"/>
</dbReference>
<dbReference type="FunFam" id="3.20.20.150:FF:000001">
    <property type="entry name" value="Probable endonuclease 4"/>
    <property type="match status" value="1"/>
</dbReference>
<dbReference type="Gene3D" id="3.20.20.150">
    <property type="entry name" value="Divalent-metal-dependent TIM barrel enzymes"/>
    <property type="match status" value="1"/>
</dbReference>
<dbReference type="HAMAP" id="MF_00152">
    <property type="entry name" value="Nfo"/>
    <property type="match status" value="1"/>
</dbReference>
<dbReference type="InterPro" id="IPR001719">
    <property type="entry name" value="AP_endonuc_2"/>
</dbReference>
<dbReference type="InterPro" id="IPR018246">
    <property type="entry name" value="AP_endonuc_F2_Zn_BS"/>
</dbReference>
<dbReference type="InterPro" id="IPR036237">
    <property type="entry name" value="Xyl_isomerase-like_sf"/>
</dbReference>
<dbReference type="InterPro" id="IPR013022">
    <property type="entry name" value="Xyl_isomerase-like_TIM-brl"/>
</dbReference>
<dbReference type="NCBIfam" id="TIGR00587">
    <property type="entry name" value="nfo"/>
    <property type="match status" value="1"/>
</dbReference>
<dbReference type="NCBIfam" id="NF002199">
    <property type="entry name" value="PRK01060.1-4"/>
    <property type="match status" value="1"/>
</dbReference>
<dbReference type="PANTHER" id="PTHR21445:SF0">
    <property type="entry name" value="APURINIC-APYRIMIDINIC ENDONUCLEASE"/>
    <property type="match status" value="1"/>
</dbReference>
<dbReference type="PANTHER" id="PTHR21445">
    <property type="entry name" value="ENDONUCLEASE IV ENDODEOXYRIBONUCLEASE IV"/>
    <property type="match status" value="1"/>
</dbReference>
<dbReference type="Pfam" id="PF01261">
    <property type="entry name" value="AP_endonuc_2"/>
    <property type="match status" value="1"/>
</dbReference>
<dbReference type="SMART" id="SM00518">
    <property type="entry name" value="AP2Ec"/>
    <property type="match status" value="1"/>
</dbReference>
<dbReference type="SUPFAM" id="SSF51658">
    <property type="entry name" value="Xylose isomerase-like"/>
    <property type="match status" value="1"/>
</dbReference>
<dbReference type="PROSITE" id="PS00729">
    <property type="entry name" value="AP_NUCLEASE_F2_1"/>
    <property type="match status" value="1"/>
</dbReference>
<dbReference type="PROSITE" id="PS00730">
    <property type="entry name" value="AP_NUCLEASE_F2_2"/>
    <property type="match status" value="1"/>
</dbReference>
<dbReference type="PROSITE" id="PS00731">
    <property type="entry name" value="AP_NUCLEASE_F2_3"/>
    <property type="match status" value="1"/>
</dbReference>
<dbReference type="PROSITE" id="PS51432">
    <property type="entry name" value="AP_NUCLEASE_F2_4"/>
    <property type="match status" value="1"/>
</dbReference>
<protein>
    <recommendedName>
        <fullName evidence="1">Probable endonuclease 4</fullName>
        <ecNumber evidence="1">3.1.21.2</ecNumber>
    </recommendedName>
    <alternativeName>
        <fullName evidence="1">Endodeoxyribonuclease IV</fullName>
    </alternativeName>
    <alternativeName>
        <fullName evidence="1">Endonuclease IV</fullName>
    </alternativeName>
</protein>
<feature type="chain" id="PRO_1000011349" description="Probable endonuclease 4">
    <location>
        <begin position="1"/>
        <end position="285"/>
    </location>
</feature>
<feature type="binding site" evidence="1">
    <location>
        <position position="69"/>
    </location>
    <ligand>
        <name>Zn(2+)</name>
        <dbReference type="ChEBI" id="CHEBI:29105"/>
        <label>1</label>
    </ligand>
</feature>
<feature type="binding site" evidence="1">
    <location>
        <position position="109"/>
    </location>
    <ligand>
        <name>Zn(2+)</name>
        <dbReference type="ChEBI" id="CHEBI:29105"/>
        <label>1</label>
    </ligand>
</feature>
<feature type="binding site" evidence="1">
    <location>
        <position position="145"/>
    </location>
    <ligand>
        <name>Zn(2+)</name>
        <dbReference type="ChEBI" id="CHEBI:29105"/>
        <label>1</label>
    </ligand>
</feature>
<feature type="binding site" evidence="1">
    <location>
        <position position="145"/>
    </location>
    <ligand>
        <name>Zn(2+)</name>
        <dbReference type="ChEBI" id="CHEBI:29105"/>
        <label>2</label>
    </ligand>
</feature>
<feature type="binding site" evidence="1">
    <location>
        <position position="179"/>
    </location>
    <ligand>
        <name>Zn(2+)</name>
        <dbReference type="ChEBI" id="CHEBI:29105"/>
        <label>2</label>
    </ligand>
</feature>
<feature type="binding site" evidence="1">
    <location>
        <position position="182"/>
    </location>
    <ligand>
        <name>Zn(2+)</name>
        <dbReference type="ChEBI" id="CHEBI:29105"/>
        <label>3</label>
    </ligand>
</feature>
<feature type="binding site" evidence="1">
    <location>
        <position position="216"/>
    </location>
    <ligand>
        <name>Zn(2+)</name>
        <dbReference type="ChEBI" id="CHEBI:29105"/>
        <label>2</label>
    </ligand>
</feature>
<feature type="binding site" evidence="1">
    <location>
        <position position="229"/>
    </location>
    <ligand>
        <name>Zn(2+)</name>
        <dbReference type="ChEBI" id="CHEBI:29105"/>
        <label>3</label>
    </ligand>
</feature>
<feature type="binding site" evidence="1">
    <location>
        <position position="231"/>
    </location>
    <ligand>
        <name>Zn(2+)</name>
        <dbReference type="ChEBI" id="CHEBI:29105"/>
        <label>3</label>
    </ligand>
</feature>
<feature type="binding site" evidence="1">
    <location>
        <position position="261"/>
    </location>
    <ligand>
        <name>Zn(2+)</name>
        <dbReference type="ChEBI" id="CHEBI:29105"/>
        <label>2</label>
    </ligand>
</feature>
<organism>
    <name type="scientific">Yersinia pestis bv. Antiqua (strain Nepal516)</name>
    <dbReference type="NCBI Taxonomy" id="377628"/>
    <lineage>
        <taxon>Bacteria</taxon>
        <taxon>Pseudomonadati</taxon>
        <taxon>Pseudomonadota</taxon>
        <taxon>Gammaproteobacteria</taxon>
        <taxon>Enterobacterales</taxon>
        <taxon>Yersiniaceae</taxon>
        <taxon>Yersinia</taxon>
    </lineage>
</organism>
<reference key="1">
    <citation type="journal article" date="2006" name="J. Bacteriol.">
        <title>Complete genome sequence of Yersinia pestis strains Antiqua and Nepal516: evidence of gene reduction in an emerging pathogen.</title>
        <authorList>
            <person name="Chain P.S.G."/>
            <person name="Hu P."/>
            <person name="Malfatti S.A."/>
            <person name="Radnedge L."/>
            <person name="Larimer F."/>
            <person name="Vergez L.M."/>
            <person name="Worsham P."/>
            <person name="Chu M.C."/>
            <person name="Andersen G.L."/>
        </authorList>
    </citation>
    <scope>NUCLEOTIDE SEQUENCE [LARGE SCALE GENOMIC DNA]</scope>
    <source>
        <strain>Nepal516</strain>
    </source>
</reference>
<reference key="2">
    <citation type="submission" date="2009-04" db="EMBL/GenBank/DDBJ databases">
        <title>Yersinia pestis Nepal516A whole genome shotgun sequencing project.</title>
        <authorList>
            <person name="Plunkett G. III"/>
            <person name="Anderson B.D."/>
            <person name="Baumler D.J."/>
            <person name="Burland V."/>
            <person name="Cabot E.L."/>
            <person name="Glasner J.D."/>
            <person name="Mau B."/>
            <person name="Neeno-Eckwall E."/>
            <person name="Perna N.T."/>
            <person name="Munk A.C."/>
            <person name="Tapia R."/>
            <person name="Green L.D."/>
            <person name="Rogers Y.C."/>
            <person name="Detter J.C."/>
            <person name="Bruce D.C."/>
            <person name="Brettin T.S."/>
        </authorList>
    </citation>
    <scope>NUCLEOTIDE SEQUENCE [LARGE SCALE GENOMIC DNA]</scope>
    <source>
        <strain>Nepal516</strain>
    </source>
</reference>
<gene>
    <name evidence="1" type="primary">nfo</name>
    <name type="ordered locus">YPN_2673</name>
    <name type="ORF">YP516_3017</name>
</gene>
<proteinExistence type="inferred from homology"/>
<evidence type="ECO:0000255" key="1">
    <source>
        <dbReference type="HAMAP-Rule" id="MF_00152"/>
    </source>
</evidence>
<comment type="function">
    <text evidence="1">Endonuclease IV plays a role in DNA repair. It cleaves phosphodiester bonds at apurinic or apyrimidinic (AP) sites, generating a 3'-hydroxyl group and a 5'-terminal sugar phosphate.</text>
</comment>
<comment type="catalytic activity">
    <reaction evidence="1">
        <text>Endonucleolytic cleavage to 5'-phosphooligonucleotide end-products.</text>
        <dbReference type="EC" id="3.1.21.2"/>
    </reaction>
</comment>
<comment type="cofactor">
    <cofactor evidence="1">
        <name>Zn(2+)</name>
        <dbReference type="ChEBI" id="CHEBI:29105"/>
    </cofactor>
    <text evidence="1">Binds 3 Zn(2+) ions.</text>
</comment>
<comment type="similarity">
    <text evidence="1">Belongs to the AP endonuclease 2 family.</text>
</comment>
<name>END4_YERPN</name>